<organism>
    <name type="scientific">Bacillus subtilis (strain 168)</name>
    <dbReference type="NCBI Taxonomy" id="224308"/>
    <lineage>
        <taxon>Bacteria</taxon>
        <taxon>Bacillati</taxon>
        <taxon>Bacillota</taxon>
        <taxon>Bacilli</taxon>
        <taxon>Bacillales</taxon>
        <taxon>Bacillaceae</taxon>
        <taxon>Bacillus</taxon>
    </lineage>
</organism>
<evidence type="ECO:0000255" key="1">
    <source>
        <dbReference type="PROSITE-ProRule" id="PRU00319"/>
    </source>
</evidence>
<name>YEZC_BACSU</name>
<reference key="1">
    <citation type="journal article" date="1997" name="Nature">
        <title>The complete genome sequence of the Gram-positive bacterium Bacillus subtilis.</title>
        <authorList>
            <person name="Kunst F."/>
            <person name="Ogasawara N."/>
            <person name="Moszer I."/>
            <person name="Albertini A.M."/>
            <person name="Alloni G."/>
            <person name="Azevedo V."/>
            <person name="Bertero M.G."/>
            <person name="Bessieres P."/>
            <person name="Bolotin A."/>
            <person name="Borchert S."/>
            <person name="Borriss R."/>
            <person name="Boursier L."/>
            <person name="Brans A."/>
            <person name="Braun M."/>
            <person name="Brignell S.C."/>
            <person name="Bron S."/>
            <person name="Brouillet S."/>
            <person name="Bruschi C.V."/>
            <person name="Caldwell B."/>
            <person name="Capuano V."/>
            <person name="Carter N.M."/>
            <person name="Choi S.-K."/>
            <person name="Codani J.-J."/>
            <person name="Connerton I.F."/>
            <person name="Cummings N.J."/>
            <person name="Daniel R.A."/>
            <person name="Denizot F."/>
            <person name="Devine K.M."/>
            <person name="Duesterhoeft A."/>
            <person name="Ehrlich S.D."/>
            <person name="Emmerson P.T."/>
            <person name="Entian K.-D."/>
            <person name="Errington J."/>
            <person name="Fabret C."/>
            <person name="Ferrari E."/>
            <person name="Foulger D."/>
            <person name="Fritz C."/>
            <person name="Fujita M."/>
            <person name="Fujita Y."/>
            <person name="Fuma S."/>
            <person name="Galizzi A."/>
            <person name="Galleron N."/>
            <person name="Ghim S.-Y."/>
            <person name="Glaser P."/>
            <person name="Goffeau A."/>
            <person name="Golightly E.J."/>
            <person name="Grandi G."/>
            <person name="Guiseppi G."/>
            <person name="Guy B.J."/>
            <person name="Haga K."/>
            <person name="Haiech J."/>
            <person name="Harwood C.R."/>
            <person name="Henaut A."/>
            <person name="Hilbert H."/>
            <person name="Holsappel S."/>
            <person name="Hosono S."/>
            <person name="Hullo M.-F."/>
            <person name="Itaya M."/>
            <person name="Jones L.-M."/>
            <person name="Joris B."/>
            <person name="Karamata D."/>
            <person name="Kasahara Y."/>
            <person name="Klaerr-Blanchard M."/>
            <person name="Klein C."/>
            <person name="Kobayashi Y."/>
            <person name="Koetter P."/>
            <person name="Koningstein G."/>
            <person name="Krogh S."/>
            <person name="Kumano M."/>
            <person name="Kurita K."/>
            <person name="Lapidus A."/>
            <person name="Lardinois S."/>
            <person name="Lauber J."/>
            <person name="Lazarevic V."/>
            <person name="Lee S.-M."/>
            <person name="Levine A."/>
            <person name="Liu H."/>
            <person name="Masuda S."/>
            <person name="Mauel C."/>
            <person name="Medigue C."/>
            <person name="Medina N."/>
            <person name="Mellado R.P."/>
            <person name="Mizuno M."/>
            <person name="Moestl D."/>
            <person name="Nakai S."/>
            <person name="Noback M."/>
            <person name="Noone D."/>
            <person name="O'Reilly M."/>
            <person name="Ogawa K."/>
            <person name="Ogiwara A."/>
            <person name="Oudega B."/>
            <person name="Park S.-H."/>
            <person name="Parro V."/>
            <person name="Pohl T.M."/>
            <person name="Portetelle D."/>
            <person name="Porwollik S."/>
            <person name="Prescott A.M."/>
            <person name="Presecan E."/>
            <person name="Pujic P."/>
            <person name="Purnelle B."/>
            <person name="Rapoport G."/>
            <person name="Rey M."/>
            <person name="Reynolds S."/>
            <person name="Rieger M."/>
            <person name="Rivolta C."/>
            <person name="Rocha E."/>
            <person name="Roche B."/>
            <person name="Rose M."/>
            <person name="Sadaie Y."/>
            <person name="Sato T."/>
            <person name="Scanlan E."/>
            <person name="Schleich S."/>
            <person name="Schroeter R."/>
            <person name="Scoffone F."/>
            <person name="Sekiguchi J."/>
            <person name="Sekowska A."/>
            <person name="Seror S.J."/>
            <person name="Serror P."/>
            <person name="Shin B.-S."/>
            <person name="Soldo B."/>
            <person name="Sorokin A."/>
            <person name="Tacconi E."/>
            <person name="Takagi T."/>
            <person name="Takahashi H."/>
            <person name="Takemaru K."/>
            <person name="Takeuchi M."/>
            <person name="Tamakoshi A."/>
            <person name="Tanaka T."/>
            <person name="Terpstra P."/>
            <person name="Tognoni A."/>
            <person name="Tosato V."/>
            <person name="Uchiyama S."/>
            <person name="Vandenbol M."/>
            <person name="Vannier F."/>
            <person name="Vassarotti A."/>
            <person name="Viari A."/>
            <person name="Wambutt R."/>
            <person name="Wedler E."/>
            <person name="Wedler H."/>
            <person name="Weitzenegger T."/>
            <person name="Winters P."/>
            <person name="Wipat A."/>
            <person name="Yamamoto H."/>
            <person name="Yamane K."/>
            <person name="Yasumoto K."/>
            <person name="Yata K."/>
            <person name="Yoshida K."/>
            <person name="Yoshikawa H.-F."/>
            <person name="Zumstein E."/>
            <person name="Yoshikawa H."/>
            <person name="Danchin A."/>
        </authorList>
    </citation>
    <scope>NUCLEOTIDE SEQUENCE [LARGE SCALE GENOMIC DNA]</scope>
    <source>
        <strain>168</strain>
    </source>
</reference>
<reference key="2">
    <citation type="journal article" date="2009" name="Microbiology">
        <title>From a consortium sequence to a unified sequence: the Bacillus subtilis 168 reference genome a decade later.</title>
        <authorList>
            <person name="Barbe V."/>
            <person name="Cruveiller S."/>
            <person name="Kunst F."/>
            <person name="Lenoble P."/>
            <person name="Meurice G."/>
            <person name="Sekowska A."/>
            <person name="Vallenet D."/>
            <person name="Wang T."/>
            <person name="Moszer I."/>
            <person name="Medigue C."/>
            <person name="Danchin A."/>
        </authorList>
    </citation>
    <scope>SEQUENCE REVISION TO C-TERMINUS</scope>
</reference>
<sequence length="139" mass="15339">MDDTDLQILSHLQRNGRLTMVELGKLVGLSSPSAAERVRKLEDKGVITGYSANICYEKLNKHVTAFILMEPKSCKHYAAFATSHPDVAENHRITGMYSYVTKVVTESVHTLEDFIDTSMAHGKPTTLVVLSSSSCHPAF</sequence>
<feature type="chain" id="PRO_0000382690" description="Uncharacterized HTH-type transcriptional regulator YezC">
    <location>
        <begin position="1"/>
        <end position="139"/>
    </location>
</feature>
<feature type="domain" description="HTH asnC-type" evidence="1">
    <location>
        <begin position="1"/>
        <end position="62"/>
    </location>
</feature>
<feature type="DNA-binding region" description="H-T-H motif" evidence="1">
    <location>
        <begin position="20"/>
        <end position="39"/>
    </location>
</feature>
<proteinExistence type="predicted"/>
<gene>
    <name type="primary">yezC</name>
    <name type="ordered locus">BSU06540</name>
</gene>
<accession>O31497</accession>
<keyword id="KW-0238">DNA-binding</keyword>
<keyword id="KW-1185">Reference proteome</keyword>
<keyword id="KW-0804">Transcription</keyword>
<keyword id="KW-0805">Transcription regulation</keyword>
<protein>
    <recommendedName>
        <fullName>Uncharacterized HTH-type transcriptional regulator YezC</fullName>
    </recommendedName>
</protein>
<dbReference type="EMBL" id="AL009126">
    <property type="protein sequence ID" value="CAB12474.2"/>
    <property type="molecule type" value="Genomic_DNA"/>
</dbReference>
<dbReference type="RefSeq" id="NP_388536.2">
    <property type="nucleotide sequence ID" value="NC_000964.3"/>
</dbReference>
<dbReference type="RefSeq" id="WP_003242890.1">
    <property type="nucleotide sequence ID" value="NZ_OZ025638.1"/>
</dbReference>
<dbReference type="SMR" id="O31497"/>
<dbReference type="FunCoup" id="O31497">
    <property type="interactions" value="8"/>
</dbReference>
<dbReference type="STRING" id="224308.BSU06540"/>
<dbReference type="PaxDb" id="224308-BSU06540"/>
<dbReference type="EnsemblBacteria" id="CAB12474">
    <property type="protein sequence ID" value="CAB12474"/>
    <property type="gene ID" value="BSU_06540"/>
</dbReference>
<dbReference type="GeneID" id="936047"/>
<dbReference type="KEGG" id="bsu:BSU06540"/>
<dbReference type="PATRIC" id="fig|224308.179.peg.710"/>
<dbReference type="eggNOG" id="COG1522">
    <property type="taxonomic scope" value="Bacteria"/>
</dbReference>
<dbReference type="InParanoid" id="O31497"/>
<dbReference type="OrthoDB" id="34294at2"/>
<dbReference type="PhylomeDB" id="O31497"/>
<dbReference type="BioCyc" id="BSUB:BSU06540-MONOMER"/>
<dbReference type="Proteomes" id="UP000001570">
    <property type="component" value="Chromosome"/>
</dbReference>
<dbReference type="GO" id="GO:0005829">
    <property type="term" value="C:cytosol"/>
    <property type="evidence" value="ECO:0000318"/>
    <property type="project" value="GO_Central"/>
</dbReference>
<dbReference type="GO" id="GO:0043565">
    <property type="term" value="F:sequence-specific DNA binding"/>
    <property type="evidence" value="ECO:0000318"/>
    <property type="project" value="GO_Central"/>
</dbReference>
<dbReference type="GO" id="GO:0043200">
    <property type="term" value="P:response to amino acid"/>
    <property type="evidence" value="ECO:0000318"/>
    <property type="project" value="GO_Central"/>
</dbReference>
<dbReference type="CDD" id="cd00090">
    <property type="entry name" value="HTH_ARSR"/>
    <property type="match status" value="1"/>
</dbReference>
<dbReference type="FunFam" id="1.10.10.10:FF:000186">
    <property type="entry name" value="AsnC family transcriptional regulator"/>
    <property type="match status" value="1"/>
</dbReference>
<dbReference type="Gene3D" id="3.30.70.920">
    <property type="match status" value="1"/>
</dbReference>
<dbReference type="Gene3D" id="1.10.10.10">
    <property type="entry name" value="Winged helix-like DNA-binding domain superfamily/Winged helix DNA-binding domain"/>
    <property type="match status" value="1"/>
</dbReference>
<dbReference type="InterPro" id="IPR011991">
    <property type="entry name" value="ArsR-like_HTH"/>
</dbReference>
<dbReference type="InterPro" id="IPR000485">
    <property type="entry name" value="AsnC-type_HTH_dom"/>
</dbReference>
<dbReference type="InterPro" id="IPR011008">
    <property type="entry name" value="Dimeric_a/b-barrel"/>
</dbReference>
<dbReference type="InterPro" id="IPR019888">
    <property type="entry name" value="Tscrpt_reg_AsnC-like"/>
</dbReference>
<dbReference type="InterPro" id="IPR019887">
    <property type="entry name" value="Tscrpt_reg_AsnC/Lrp_C"/>
</dbReference>
<dbReference type="InterPro" id="IPR019885">
    <property type="entry name" value="Tscrpt_reg_HTH_AsnC-type_CS"/>
</dbReference>
<dbReference type="InterPro" id="IPR036388">
    <property type="entry name" value="WH-like_DNA-bd_sf"/>
</dbReference>
<dbReference type="InterPro" id="IPR036390">
    <property type="entry name" value="WH_DNA-bd_sf"/>
</dbReference>
<dbReference type="PANTHER" id="PTHR30154">
    <property type="entry name" value="LEUCINE-RESPONSIVE REGULATORY PROTEIN"/>
    <property type="match status" value="1"/>
</dbReference>
<dbReference type="PANTHER" id="PTHR30154:SF20">
    <property type="entry name" value="LEUCINE-RESPONSIVE REGULATORY PROTEIN"/>
    <property type="match status" value="1"/>
</dbReference>
<dbReference type="Pfam" id="PF01037">
    <property type="entry name" value="AsnC_trans_reg"/>
    <property type="match status" value="1"/>
</dbReference>
<dbReference type="Pfam" id="PF13412">
    <property type="entry name" value="HTH_24"/>
    <property type="match status" value="1"/>
</dbReference>
<dbReference type="PRINTS" id="PR00033">
    <property type="entry name" value="HTHASNC"/>
</dbReference>
<dbReference type="SMART" id="SM00344">
    <property type="entry name" value="HTH_ASNC"/>
    <property type="match status" value="1"/>
</dbReference>
<dbReference type="SUPFAM" id="SSF54909">
    <property type="entry name" value="Dimeric alpha+beta barrel"/>
    <property type="match status" value="1"/>
</dbReference>
<dbReference type="SUPFAM" id="SSF46785">
    <property type="entry name" value="Winged helix' DNA-binding domain"/>
    <property type="match status" value="1"/>
</dbReference>
<dbReference type="PROSITE" id="PS00519">
    <property type="entry name" value="HTH_ASNC_1"/>
    <property type="match status" value="1"/>
</dbReference>
<dbReference type="PROSITE" id="PS50956">
    <property type="entry name" value="HTH_ASNC_2"/>
    <property type="match status" value="1"/>
</dbReference>